<dbReference type="EC" id="2.1.1.-" evidence="1"/>
<dbReference type="EMBL" id="CP000255">
    <property type="protein sequence ID" value="ABD22442.1"/>
    <property type="molecule type" value="Genomic_DNA"/>
</dbReference>
<dbReference type="RefSeq" id="WP_000215595.1">
    <property type="nucleotide sequence ID" value="NZ_CP027476.1"/>
</dbReference>
<dbReference type="SMR" id="Q2FDF0"/>
<dbReference type="KEGG" id="saa:SAUSA300_2644"/>
<dbReference type="HOGENOM" id="CLU_065341_0_0_9"/>
<dbReference type="OMA" id="AGMPNKK"/>
<dbReference type="Proteomes" id="UP000001939">
    <property type="component" value="Chromosome"/>
</dbReference>
<dbReference type="GO" id="GO:0005829">
    <property type="term" value="C:cytosol"/>
    <property type="evidence" value="ECO:0007669"/>
    <property type="project" value="TreeGrafter"/>
</dbReference>
<dbReference type="GO" id="GO:0070043">
    <property type="term" value="F:rRNA (guanine-N7-)-methyltransferase activity"/>
    <property type="evidence" value="ECO:0007669"/>
    <property type="project" value="UniProtKB-UniRule"/>
</dbReference>
<dbReference type="CDD" id="cd02440">
    <property type="entry name" value="AdoMet_MTases"/>
    <property type="match status" value="1"/>
</dbReference>
<dbReference type="FunFam" id="3.40.50.150:FF:000041">
    <property type="entry name" value="Ribosomal RNA small subunit methyltransferase G"/>
    <property type="match status" value="1"/>
</dbReference>
<dbReference type="Gene3D" id="3.40.50.150">
    <property type="entry name" value="Vaccinia Virus protein VP39"/>
    <property type="match status" value="1"/>
</dbReference>
<dbReference type="HAMAP" id="MF_00074">
    <property type="entry name" value="16SrRNA_methyltr_G"/>
    <property type="match status" value="1"/>
</dbReference>
<dbReference type="InterPro" id="IPR003682">
    <property type="entry name" value="rRNA_ssu_MeTfrase_G"/>
</dbReference>
<dbReference type="InterPro" id="IPR029063">
    <property type="entry name" value="SAM-dependent_MTases_sf"/>
</dbReference>
<dbReference type="NCBIfam" id="TIGR00138">
    <property type="entry name" value="rsmG_gidB"/>
    <property type="match status" value="1"/>
</dbReference>
<dbReference type="PANTHER" id="PTHR31760">
    <property type="entry name" value="S-ADENOSYL-L-METHIONINE-DEPENDENT METHYLTRANSFERASES SUPERFAMILY PROTEIN"/>
    <property type="match status" value="1"/>
</dbReference>
<dbReference type="PANTHER" id="PTHR31760:SF0">
    <property type="entry name" value="S-ADENOSYL-L-METHIONINE-DEPENDENT METHYLTRANSFERASES SUPERFAMILY PROTEIN"/>
    <property type="match status" value="1"/>
</dbReference>
<dbReference type="Pfam" id="PF02527">
    <property type="entry name" value="GidB"/>
    <property type="match status" value="1"/>
</dbReference>
<dbReference type="PIRSF" id="PIRSF003078">
    <property type="entry name" value="GidB"/>
    <property type="match status" value="1"/>
</dbReference>
<dbReference type="SUPFAM" id="SSF53335">
    <property type="entry name" value="S-adenosyl-L-methionine-dependent methyltransferases"/>
    <property type="match status" value="1"/>
</dbReference>
<reference key="1">
    <citation type="journal article" date="2006" name="Lancet">
        <title>Complete genome sequence of USA300, an epidemic clone of community-acquired meticillin-resistant Staphylococcus aureus.</title>
        <authorList>
            <person name="Diep B.A."/>
            <person name="Gill S.R."/>
            <person name="Chang R.F."/>
            <person name="Phan T.H."/>
            <person name="Chen J.H."/>
            <person name="Davidson M.G."/>
            <person name="Lin F."/>
            <person name="Lin J."/>
            <person name="Carleton H.A."/>
            <person name="Mongodin E.F."/>
            <person name="Sensabaugh G.F."/>
            <person name="Perdreau-Remington F."/>
        </authorList>
    </citation>
    <scope>NUCLEOTIDE SEQUENCE [LARGE SCALE GENOMIC DNA]</scope>
    <source>
        <strain>USA300</strain>
    </source>
</reference>
<protein>
    <recommendedName>
        <fullName evidence="1">Ribosomal RNA small subunit methyltransferase G</fullName>
        <ecNumber evidence="1">2.1.1.-</ecNumber>
    </recommendedName>
    <alternativeName>
        <fullName evidence="1">16S rRNA 7-methylguanosine methyltransferase</fullName>
        <shortName evidence="1">16S rRNA m7G methyltransferase</shortName>
    </alternativeName>
</protein>
<sequence length="239" mass="27359">MTVEWLAEQLKEHNIQLTETQKQQFQTYYRLLVEWNEKMNLTSITDEHDVYLKHFYDSIAPSFYFDFNQPISICDVGAGAGFPSIPLKIMFPQLKVTIVDSLNKRIQFLNHLASELQLQDVSFIHDRAETFGKGVYRESYDVVTARAVARLSVLSELCLPLVKKGGQFVALKSSKGEEELEEAKFAISVLGGNVTETHTFELPEDAGERQMFIIDKKRQTPKKYPRKPGTPNKTPLLEK</sequence>
<evidence type="ECO:0000255" key="1">
    <source>
        <dbReference type="HAMAP-Rule" id="MF_00074"/>
    </source>
</evidence>
<evidence type="ECO:0000256" key="2">
    <source>
        <dbReference type="SAM" id="MobiDB-lite"/>
    </source>
</evidence>
<organism>
    <name type="scientific">Staphylococcus aureus (strain USA300)</name>
    <dbReference type="NCBI Taxonomy" id="367830"/>
    <lineage>
        <taxon>Bacteria</taxon>
        <taxon>Bacillati</taxon>
        <taxon>Bacillota</taxon>
        <taxon>Bacilli</taxon>
        <taxon>Bacillales</taxon>
        <taxon>Staphylococcaceae</taxon>
        <taxon>Staphylococcus</taxon>
    </lineage>
</organism>
<accession>Q2FDF0</accession>
<name>RSMG_STAA3</name>
<gene>
    <name evidence="1" type="primary">rsmG</name>
    <name type="ordered locus">SAUSA300_2644</name>
</gene>
<feature type="chain" id="PRO_1000010214" description="Ribosomal RNA small subunit methyltransferase G">
    <location>
        <begin position="1"/>
        <end position="239"/>
    </location>
</feature>
<feature type="region of interest" description="Disordered" evidence="2">
    <location>
        <begin position="215"/>
        <end position="239"/>
    </location>
</feature>
<feature type="binding site" evidence="1">
    <location>
        <position position="77"/>
    </location>
    <ligand>
        <name>S-adenosyl-L-methionine</name>
        <dbReference type="ChEBI" id="CHEBI:59789"/>
    </ligand>
</feature>
<feature type="binding site" evidence="1">
    <location>
        <position position="82"/>
    </location>
    <ligand>
        <name>S-adenosyl-L-methionine</name>
        <dbReference type="ChEBI" id="CHEBI:59789"/>
    </ligand>
</feature>
<feature type="binding site" evidence="1">
    <location>
        <begin position="128"/>
        <end position="129"/>
    </location>
    <ligand>
        <name>S-adenosyl-L-methionine</name>
        <dbReference type="ChEBI" id="CHEBI:59789"/>
    </ligand>
</feature>
<feature type="binding site" evidence="1">
    <location>
        <position position="146"/>
    </location>
    <ligand>
        <name>S-adenosyl-L-methionine</name>
        <dbReference type="ChEBI" id="CHEBI:59789"/>
    </ligand>
</feature>
<keyword id="KW-0963">Cytoplasm</keyword>
<keyword id="KW-0489">Methyltransferase</keyword>
<keyword id="KW-0698">rRNA processing</keyword>
<keyword id="KW-0949">S-adenosyl-L-methionine</keyword>
<keyword id="KW-0808">Transferase</keyword>
<proteinExistence type="inferred from homology"/>
<comment type="function">
    <text evidence="1">Specifically methylates the N7 position of guanine in position 535 of 16S rRNA.</text>
</comment>
<comment type="subcellular location">
    <subcellularLocation>
        <location evidence="1">Cytoplasm</location>
    </subcellularLocation>
</comment>
<comment type="similarity">
    <text evidence="1">Belongs to the methyltransferase superfamily. RNA methyltransferase RsmG family.</text>
</comment>